<feature type="chain" id="PRO_0000141867" description="3-isopropylmalate dehydratase small subunit">
    <location>
        <begin position="1"/>
        <end position="201"/>
    </location>
</feature>
<evidence type="ECO:0000255" key="1">
    <source>
        <dbReference type="HAMAP-Rule" id="MF_01031"/>
    </source>
</evidence>
<name>LEUD_RHILO</name>
<protein>
    <recommendedName>
        <fullName evidence="1">3-isopropylmalate dehydratase small subunit</fullName>
        <ecNumber evidence="1">4.2.1.33</ecNumber>
    </recommendedName>
    <alternativeName>
        <fullName evidence="1">Alpha-IPM isomerase</fullName>
        <shortName evidence="1">IPMI</shortName>
    </alternativeName>
    <alternativeName>
        <fullName evidence="1">Isopropylmalate isomerase</fullName>
    </alternativeName>
</protein>
<gene>
    <name evidence="1" type="primary">leuD</name>
    <name type="ordered locus">mll4408</name>
</gene>
<keyword id="KW-0028">Amino-acid biosynthesis</keyword>
<keyword id="KW-0100">Branched-chain amino acid biosynthesis</keyword>
<keyword id="KW-0432">Leucine biosynthesis</keyword>
<keyword id="KW-0456">Lyase</keyword>
<proteinExistence type="inferred from homology"/>
<dbReference type="EC" id="4.2.1.33" evidence="1"/>
<dbReference type="EMBL" id="BA000012">
    <property type="protein sequence ID" value="BAB51069.1"/>
    <property type="molecule type" value="Genomic_DNA"/>
</dbReference>
<dbReference type="RefSeq" id="WP_010912411.1">
    <property type="nucleotide sequence ID" value="NC_002678.2"/>
</dbReference>
<dbReference type="SMR" id="Q98E51"/>
<dbReference type="KEGG" id="mlo:mll4408"/>
<dbReference type="PATRIC" id="fig|266835.9.peg.3477"/>
<dbReference type="eggNOG" id="COG0066">
    <property type="taxonomic scope" value="Bacteria"/>
</dbReference>
<dbReference type="HOGENOM" id="CLU_081378_0_3_5"/>
<dbReference type="UniPathway" id="UPA00048">
    <property type="reaction ID" value="UER00071"/>
</dbReference>
<dbReference type="Proteomes" id="UP000000552">
    <property type="component" value="Chromosome"/>
</dbReference>
<dbReference type="GO" id="GO:0009316">
    <property type="term" value="C:3-isopropylmalate dehydratase complex"/>
    <property type="evidence" value="ECO:0007669"/>
    <property type="project" value="InterPro"/>
</dbReference>
<dbReference type="GO" id="GO:0003861">
    <property type="term" value="F:3-isopropylmalate dehydratase activity"/>
    <property type="evidence" value="ECO:0007669"/>
    <property type="project" value="UniProtKB-UniRule"/>
</dbReference>
<dbReference type="GO" id="GO:0009098">
    <property type="term" value="P:L-leucine biosynthetic process"/>
    <property type="evidence" value="ECO:0007669"/>
    <property type="project" value="UniProtKB-UniRule"/>
</dbReference>
<dbReference type="CDD" id="cd01577">
    <property type="entry name" value="IPMI_Swivel"/>
    <property type="match status" value="1"/>
</dbReference>
<dbReference type="FunFam" id="3.20.19.10:FF:000003">
    <property type="entry name" value="3-isopropylmalate dehydratase small subunit"/>
    <property type="match status" value="1"/>
</dbReference>
<dbReference type="Gene3D" id="3.20.19.10">
    <property type="entry name" value="Aconitase, domain 4"/>
    <property type="match status" value="1"/>
</dbReference>
<dbReference type="HAMAP" id="MF_01031">
    <property type="entry name" value="LeuD_type1"/>
    <property type="match status" value="1"/>
</dbReference>
<dbReference type="InterPro" id="IPR004431">
    <property type="entry name" value="3-IsopropMal_deHydase_ssu"/>
</dbReference>
<dbReference type="InterPro" id="IPR015928">
    <property type="entry name" value="Aconitase/3IPM_dehydase_swvl"/>
</dbReference>
<dbReference type="InterPro" id="IPR000573">
    <property type="entry name" value="AconitaseA/IPMdHydase_ssu_swvl"/>
</dbReference>
<dbReference type="InterPro" id="IPR033940">
    <property type="entry name" value="IPMI_Swivel"/>
</dbReference>
<dbReference type="InterPro" id="IPR050075">
    <property type="entry name" value="LeuD"/>
</dbReference>
<dbReference type="NCBIfam" id="TIGR00171">
    <property type="entry name" value="leuD"/>
    <property type="match status" value="1"/>
</dbReference>
<dbReference type="NCBIfam" id="NF002458">
    <property type="entry name" value="PRK01641.1"/>
    <property type="match status" value="1"/>
</dbReference>
<dbReference type="PANTHER" id="PTHR43345:SF5">
    <property type="entry name" value="3-ISOPROPYLMALATE DEHYDRATASE SMALL SUBUNIT"/>
    <property type="match status" value="1"/>
</dbReference>
<dbReference type="PANTHER" id="PTHR43345">
    <property type="entry name" value="3-ISOPROPYLMALATE DEHYDRATASE SMALL SUBUNIT 2-RELATED-RELATED"/>
    <property type="match status" value="1"/>
</dbReference>
<dbReference type="Pfam" id="PF00694">
    <property type="entry name" value="Aconitase_C"/>
    <property type="match status" value="1"/>
</dbReference>
<dbReference type="SUPFAM" id="SSF52016">
    <property type="entry name" value="LeuD/IlvD-like"/>
    <property type="match status" value="1"/>
</dbReference>
<organism>
    <name type="scientific">Mesorhizobium japonicum (strain LMG 29417 / CECT 9101 / MAFF 303099)</name>
    <name type="common">Mesorhizobium loti (strain MAFF 303099)</name>
    <dbReference type="NCBI Taxonomy" id="266835"/>
    <lineage>
        <taxon>Bacteria</taxon>
        <taxon>Pseudomonadati</taxon>
        <taxon>Pseudomonadota</taxon>
        <taxon>Alphaproteobacteria</taxon>
        <taxon>Hyphomicrobiales</taxon>
        <taxon>Phyllobacteriaceae</taxon>
        <taxon>Mesorhizobium</taxon>
    </lineage>
</organism>
<accession>Q98E51</accession>
<sequence length="201" mass="22117">MEKFTKLTGVAAPMPIVNVDTDMIIPKDYLKTIKRTGLGTGLFAEMRYNDDGSENPDFVLNKPAYRKAQILVAGDNFGCGSSREHAPWALLDFGIRCVISTSFADIFYNNCFKNGVLPITVSPEDLEKLMDDASRGSNATLSVDLEAKEIRGPDGGVVKFDLDDFKRHCMLNGLDDIGLTMEKAGAIASFEKKNAEQRPWA</sequence>
<reference key="1">
    <citation type="journal article" date="2000" name="DNA Res.">
        <title>Complete genome structure of the nitrogen-fixing symbiotic bacterium Mesorhizobium loti.</title>
        <authorList>
            <person name="Kaneko T."/>
            <person name="Nakamura Y."/>
            <person name="Sato S."/>
            <person name="Asamizu E."/>
            <person name="Kato T."/>
            <person name="Sasamoto S."/>
            <person name="Watanabe A."/>
            <person name="Idesawa K."/>
            <person name="Ishikawa A."/>
            <person name="Kawashima K."/>
            <person name="Kimura T."/>
            <person name="Kishida Y."/>
            <person name="Kiyokawa C."/>
            <person name="Kohara M."/>
            <person name="Matsumoto M."/>
            <person name="Matsuno A."/>
            <person name="Mochizuki Y."/>
            <person name="Nakayama S."/>
            <person name="Nakazaki N."/>
            <person name="Shimpo S."/>
            <person name="Sugimoto M."/>
            <person name="Takeuchi C."/>
            <person name="Yamada M."/>
            <person name="Tabata S."/>
        </authorList>
    </citation>
    <scope>NUCLEOTIDE SEQUENCE [LARGE SCALE GENOMIC DNA]</scope>
    <source>
        <strain>LMG 29417 / CECT 9101 / MAFF 303099</strain>
    </source>
</reference>
<comment type="function">
    <text evidence="1">Catalyzes the isomerization between 2-isopropylmalate and 3-isopropylmalate, via the formation of 2-isopropylmaleate.</text>
</comment>
<comment type="catalytic activity">
    <reaction evidence="1">
        <text>(2R,3S)-3-isopropylmalate = (2S)-2-isopropylmalate</text>
        <dbReference type="Rhea" id="RHEA:32287"/>
        <dbReference type="ChEBI" id="CHEBI:1178"/>
        <dbReference type="ChEBI" id="CHEBI:35121"/>
        <dbReference type="EC" id="4.2.1.33"/>
    </reaction>
</comment>
<comment type="pathway">
    <text evidence="1">Amino-acid biosynthesis; L-leucine biosynthesis; L-leucine from 3-methyl-2-oxobutanoate: step 2/4.</text>
</comment>
<comment type="subunit">
    <text evidence="1">Heterodimer of LeuC and LeuD.</text>
</comment>
<comment type="similarity">
    <text evidence="1">Belongs to the LeuD family. LeuD type 1 subfamily.</text>
</comment>